<name>KUN1_RHIHE</name>
<dbReference type="EMBL" id="HM140789">
    <property type="protein sequence ID" value="ADJ56344.1"/>
    <property type="molecule type" value="mRNA"/>
</dbReference>
<dbReference type="GO" id="GO:0005576">
    <property type="term" value="C:extracellular region"/>
    <property type="evidence" value="ECO:0007669"/>
    <property type="project" value="UniProtKB-SubCell"/>
</dbReference>
<dbReference type="GO" id="GO:0004867">
    <property type="term" value="F:serine-type endopeptidase inhibitor activity"/>
    <property type="evidence" value="ECO:0007669"/>
    <property type="project" value="UniProtKB-KW"/>
</dbReference>
<dbReference type="GO" id="GO:0090729">
    <property type="term" value="F:toxin activity"/>
    <property type="evidence" value="ECO:0007669"/>
    <property type="project" value="UniProtKB-KW"/>
</dbReference>
<dbReference type="GO" id="GO:0044562">
    <property type="term" value="P:envenomation resulting in negative regulation of voltage-gated potassium channel activity in another organism"/>
    <property type="evidence" value="ECO:0007669"/>
    <property type="project" value="UniProtKB-ARBA"/>
</dbReference>
<dbReference type="Gene3D" id="4.10.410.10">
    <property type="entry name" value="Pancreatic trypsin inhibitor Kunitz domain"/>
    <property type="match status" value="1"/>
</dbReference>
<dbReference type="InterPro" id="IPR002223">
    <property type="entry name" value="Kunitz_BPTI"/>
</dbReference>
<dbReference type="InterPro" id="IPR036880">
    <property type="entry name" value="Kunitz_BPTI_sf"/>
</dbReference>
<dbReference type="InterPro" id="IPR050098">
    <property type="entry name" value="TFPI/VKTCI-like"/>
</dbReference>
<dbReference type="PANTHER" id="PTHR10083">
    <property type="entry name" value="KUNITZ-TYPE PROTEASE INHIBITOR-RELATED"/>
    <property type="match status" value="1"/>
</dbReference>
<dbReference type="Pfam" id="PF00014">
    <property type="entry name" value="Kunitz_BPTI"/>
    <property type="match status" value="1"/>
</dbReference>
<dbReference type="SMART" id="SM00131">
    <property type="entry name" value="KU"/>
    <property type="match status" value="1"/>
</dbReference>
<dbReference type="SUPFAM" id="SSF57362">
    <property type="entry name" value="BPTI-like"/>
    <property type="match status" value="1"/>
</dbReference>
<dbReference type="PROSITE" id="PS50279">
    <property type="entry name" value="BPTI_KUNITZ_2"/>
    <property type="match status" value="1"/>
</dbReference>
<feature type="signal peptide" evidence="1">
    <location>
        <begin position="1"/>
        <end position="18"/>
    </location>
</feature>
<feature type="chain" id="PRO_5003125512" description="Anticoagulant protein rhipilin-1">
    <location>
        <begin position="19"/>
        <end position="164"/>
    </location>
</feature>
<feature type="domain" description="BPTI/Kunitz inhibitor" evidence="2">
    <location>
        <begin position="86"/>
        <end position="138"/>
    </location>
</feature>
<feature type="region of interest" description="Disordered" evidence="3">
    <location>
        <begin position="20"/>
        <end position="84"/>
    </location>
</feature>
<feature type="compositionally biased region" description="Low complexity" evidence="3">
    <location>
        <begin position="27"/>
        <end position="36"/>
    </location>
</feature>
<feature type="disulfide bond" evidence="2">
    <location>
        <begin position="86"/>
        <end position="138"/>
    </location>
</feature>
<feature type="disulfide bond" evidence="2">
    <location>
        <begin position="95"/>
        <end position="121"/>
    </location>
</feature>
<feature type="disulfide bond" evidence="2">
    <location>
        <begin position="113"/>
        <end position="134"/>
    </location>
</feature>
<feature type="disulfide bond" evidence="5">
    <location>
        <begin position="131"/>
        <end position="155"/>
    </location>
</feature>
<comment type="function">
    <text evidence="4">Anticoagulant protein that may inhibit serine proteases. The anticoagulant effect of this recombinant protein on blood clotting is found both in the recalcification time (RT) and the activated partial thromboplastin time (APTT) tests, indicating it acts in the common pathway of blood coagulation.</text>
</comment>
<comment type="subcellular location">
    <subcellularLocation>
        <location evidence="5">Secreted</location>
    </subcellularLocation>
</comment>
<comment type="tissue specificity">
    <text evidence="5">Expressed in salivary glands.</text>
</comment>
<comment type="induction">
    <text evidence="4">By blood feeding.</text>
</comment>
<comment type="disruption phenotype">
    <text evidence="4">The tick attachment time is prolonged and the engorgement body weight is decreased after gene silencing by RNA interference. No significant difference is observed in the feeding period and survival.</text>
</comment>
<comment type="biotechnology">
    <text evidence="6">May be studied for future application as a vaccine, since it impairs tick attachment time and engorgement body weight.</text>
</comment>
<reference evidence="7" key="1">
    <citation type="journal article" date="2011" name="J. Insect Physiol.">
        <title>Characterization of the anticoagulant protein Rhipilin-1 from the Rhipicephalus haemaphysaloides tick.</title>
        <authorList>
            <person name="Gao X."/>
            <person name="Shi L."/>
            <person name="Zhou Y."/>
            <person name="Cao J."/>
            <person name="Zhang H."/>
            <person name="Zhou J."/>
        </authorList>
    </citation>
    <scope>NUCLEOTIDE SEQUENCE [MRNA]</scope>
    <scope>FUNCTION</scope>
    <scope>INDUCTION BY BLOOD FEEDING</scope>
    <scope>DISRUPTION PHENOTYPE</scope>
    <scope>RECOMBINANT EXPRESSION</scope>
    <source>
        <tissue>Salivary gland</tissue>
    </source>
</reference>
<organism>
    <name type="scientific">Rhipicephalus haemaphysaloides</name>
    <name type="common">Tick</name>
    <dbReference type="NCBI Taxonomy" id="237073"/>
    <lineage>
        <taxon>Eukaryota</taxon>
        <taxon>Metazoa</taxon>
        <taxon>Ecdysozoa</taxon>
        <taxon>Arthropoda</taxon>
        <taxon>Chelicerata</taxon>
        <taxon>Arachnida</taxon>
        <taxon>Acari</taxon>
        <taxon>Parasitiformes</taxon>
        <taxon>Ixodida</taxon>
        <taxon>Ixodoidea</taxon>
        <taxon>Ixodidae</taxon>
        <taxon>Rhipicephalinae</taxon>
        <taxon>Rhipicephalus</taxon>
        <taxon>Rhipicephalus</taxon>
    </lineage>
</organism>
<proteinExistence type="evidence at transcript level"/>
<evidence type="ECO:0000255" key="1"/>
<evidence type="ECO:0000255" key="2">
    <source>
        <dbReference type="PROSITE-ProRule" id="PRU00031"/>
    </source>
</evidence>
<evidence type="ECO:0000256" key="3">
    <source>
        <dbReference type="SAM" id="MobiDB-lite"/>
    </source>
</evidence>
<evidence type="ECO:0000269" key="4">
    <source>
    </source>
</evidence>
<evidence type="ECO:0000305" key="5"/>
<evidence type="ECO:0000305" key="6">
    <source>
    </source>
</evidence>
<evidence type="ECO:0000312" key="7">
    <source>
        <dbReference type="EMBL" id="ADJ56344.1"/>
    </source>
</evidence>
<accession>D9IFL3</accession>
<protein>
    <recommendedName>
        <fullName>Anticoagulant protein rhipilin-1</fullName>
    </recommendedName>
</protein>
<keyword id="KW-1203">Blood coagulation cascade inhibiting toxin</keyword>
<keyword id="KW-1015">Disulfide bond</keyword>
<keyword id="KW-1199">Hemostasis impairing toxin</keyword>
<keyword id="KW-0646">Protease inhibitor</keyword>
<keyword id="KW-0964">Secreted</keyword>
<keyword id="KW-0722">Serine protease inhibitor</keyword>
<keyword id="KW-0732">Signal</keyword>
<keyword id="KW-0800">Toxin</keyword>
<sequence length="164" mass="18044">MKILQYALLACLLVSILGDDDDEENEGAAGSDDAGATPTALSKPAATSAEGNTAAKNSGGDIKQPKQELPEPSSKGQKKPRLPKRCLFKPEQGNCAGSRFLPRWWYNPETESCEPFTYPVCNKKNEAFVSCTLCMNMCMRNKRGREKAKWIRKVCRKSPKVKSG</sequence>